<feature type="chain" id="PRO_0000369094" description="Non-structural protein 1">
    <location>
        <begin position="1"/>
        <end position="496"/>
    </location>
</feature>
<feature type="region of interest" description="RNA-binding" evidence="1">
    <location>
        <begin position="1"/>
        <end position="81"/>
    </location>
</feature>
<feature type="region of interest" description="Zinc-binding domain" evidence="1">
    <location>
        <begin position="42"/>
        <end position="79"/>
    </location>
</feature>
<feature type="region of interest" description="Important for cytoskeleton localization" evidence="1">
    <location>
        <begin position="82"/>
        <end position="177"/>
    </location>
</feature>
<feature type="region of interest" description="Interaction with host IRF3" evidence="1">
    <location>
        <begin position="321"/>
        <end position="496"/>
    </location>
</feature>
<feature type="short sequence motif" description="pLxIS motif" evidence="1">
    <location>
        <begin position="486"/>
        <end position="489"/>
    </location>
</feature>
<feature type="sequence variant" description="In strain: Isolate 30-1A.">
    <original>MLILG</original>
    <variation>LRGGV</variation>
    <location>
        <begin position="410"/>
        <end position="414"/>
    </location>
</feature>
<feature type="sequence variant" description="In strain: Isolate 30-1A.">
    <location>
        <begin position="415"/>
        <end position="496"/>
    </location>
</feature>
<evidence type="ECO:0000255" key="1">
    <source>
        <dbReference type="HAMAP-Rule" id="MF_04088"/>
    </source>
</evidence>
<organismHost>
    <name type="scientific">Macaca mulatta</name>
    <name type="common">Rhesus macaque</name>
    <dbReference type="NCBI Taxonomy" id="9544"/>
</organismHost>
<sequence length="496" mass="58623">MATFKDACFHYRRLTALNRRLCNIGANSICMPVPDEKIKGWCLECCQIADLTHCYGCSLPHVCKWCVQNRRCFLDNEPHLLKLRTVKHPITKDKLQCIIDLYNIIFPINDKVIRKFERMIKQRKCRNQYKIEWYNHLLLPITLNAAAFKFDENNLYYVFGLYEKSVSDIYAPYRIVNFINEFDKLLLDDINFTRMSNLPIELRNHYAKKYFQLSRLPSSKLKQIYFSDFTKETVIFNTYTKTPGRSIYRNVTEFNWRDELELYSDLKNDKNKLIAAMMTSKYTRFYAHDNNFGRLKMTIFELGHHCQPNYVASNHPGNASDIQYCKWCNIKYFLSKIDWRIRDMYNLLMEFIKDCYKSNVNVGHCSSVENIYPLIKRLIWSLFTNHMDQTIEEVFNHMSPVSVEGTNVIMLILGLNISLYNEIKRTLNVDSIPMVLNLNEFSSIVKSISSKWYNVDELDKLPMSIKSTEELIEMKNSGTLTEEFELLISNSEDDNE</sequence>
<organism>
    <name type="scientific">Rotavirus A (strain RVA/SA11-FEM/G3P6[1])</name>
    <name type="common">RV-A</name>
    <name type="synonym">Simian Agent 11 (strain FEM)</name>
    <dbReference type="NCBI Taxonomy" id="10925"/>
    <lineage>
        <taxon>Viruses</taxon>
        <taxon>Riboviria</taxon>
        <taxon>Orthornavirae</taxon>
        <taxon>Duplornaviricota</taxon>
        <taxon>Resentoviricetes</taxon>
        <taxon>Reovirales</taxon>
        <taxon>Sedoreoviridae</taxon>
        <taxon>Rotavirus</taxon>
        <taxon>Rotavirus A</taxon>
    </lineage>
</organism>
<dbReference type="EMBL" id="AF290881">
    <property type="protein sequence ID" value="AAK14069.1"/>
    <property type="molecule type" value="Genomic_RNA"/>
</dbReference>
<dbReference type="EMBL" id="AF290882">
    <property type="protein sequence ID" value="AAK14070.1"/>
    <property type="molecule type" value="Genomic_RNA"/>
</dbReference>
<dbReference type="GO" id="GO:0030430">
    <property type="term" value="C:host cell cytoplasm"/>
    <property type="evidence" value="ECO:0007669"/>
    <property type="project" value="UniProtKB-UniRule"/>
</dbReference>
<dbReference type="GO" id="GO:0044163">
    <property type="term" value="C:host cytoskeleton"/>
    <property type="evidence" value="ECO:0007669"/>
    <property type="project" value="UniProtKB-SubCell"/>
</dbReference>
<dbReference type="GO" id="GO:0046872">
    <property type="term" value="F:metal ion binding"/>
    <property type="evidence" value="ECO:0007669"/>
    <property type="project" value="UniProtKB-UniRule"/>
</dbReference>
<dbReference type="GO" id="GO:0003723">
    <property type="term" value="F:RNA binding"/>
    <property type="evidence" value="ECO:0007669"/>
    <property type="project" value="UniProtKB-UniRule"/>
</dbReference>
<dbReference type="GO" id="GO:0039548">
    <property type="term" value="P:symbiont-mediated suppression of host cytoplasmic pattern recognition receptor signaling pathway via inhibition of IRF3 activity"/>
    <property type="evidence" value="ECO:0007669"/>
    <property type="project" value="UniProtKB-UniRule"/>
</dbReference>
<dbReference type="GO" id="GO:0039557">
    <property type="term" value="P:symbiont-mediated suppression of host cytoplasmic pattern recognition receptor signaling pathway via inhibition of IRF7 activity"/>
    <property type="evidence" value="ECO:0007669"/>
    <property type="project" value="UniProtKB-UniRule"/>
</dbReference>
<dbReference type="HAMAP" id="MF_04088">
    <property type="entry name" value="ROTA_NSP1"/>
    <property type="match status" value="1"/>
</dbReference>
<dbReference type="InterPro" id="IPR002148">
    <property type="entry name" value="Rotavirus_NSP1"/>
</dbReference>
<dbReference type="Pfam" id="PF00981">
    <property type="entry name" value="Rota_NS53"/>
    <property type="match status" value="1"/>
</dbReference>
<comment type="function">
    <text evidence="1">Plays a role in the inhibition of host innate immunity by inducing the degradation of key host factors required to activate interferon production such as IRF3, IRF5 or IRF7. Associates with components of cullin RING ligases (CRLs) including CUL1 or CUL3, which are essential multisubunit ubiquitination complexes, to modulate their activities.</text>
</comment>
<comment type="subunit">
    <text evidence="1">Interacts (via C-terminus) with host IRF3; this interaction leads to IRF3 degradation. Interacts with host IRF7; this interaction leads to IRF7 degradation. Interacts with host CUL1 and CUL3.</text>
</comment>
<comment type="subcellular location">
    <subcellularLocation>
        <location evidence="1">Host cytoplasm</location>
        <location evidence="1">Host cytoskeleton</location>
    </subcellularLocation>
</comment>
<comment type="domain">
    <text evidence="1">The integrity of the zinc-binding domain in NSP1 is important for degradation of host IRF3.</text>
</comment>
<comment type="domain">
    <text evidence="1">The pLxIS motif targets host IRF3 for degradation; however phosphorylation of NSP1 pLxIS motif is not required for its activity.</text>
</comment>
<comment type="similarity">
    <text evidence="1">Belongs to the rotavirus NSP1 family.</text>
</comment>
<keyword id="KW-1035">Host cytoplasm</keyword>
<keyword id="KW-1037">Host cytoskeleton</keyword>
<keyword id="KW-0945">Host-virus interaction</keyword>
<keyword id="KW-1090">Inhibition of host innate immune response by virus</keyword>
<keyword id="KW-1092">Inhibition of host IRF3 by virus</keyword>
<keyword id="KW-1093">Inhibition of host IRF7 by virus</keyword>
<keyword id="KW-1113">Inhibition of host RLR pathway by virus</keyword>
<keyword id="KW-0922">Interferon antiviral system evasion</keyword>
<keyword id="KW-0479">Metal-binding</keyword>
<keyword id="KW-0694">RNA-binding</keyword>
<keyword id="KW-0899">Viral immunoevasion</keyword>
<reference key="1">
    <citation type="journal article" date="2001" name="J. Virol.">
        <title>Effect of intragenic rearrangement and changes in the 3' consensus sequence on NSP1 expression and rotavirus replication.</title>
        <authorList>
            <person name="Patton J.T."/>
            <person name="Taraporewala Z.F."/>
            <person name="Chen D."/>
            <person name="Chizhikov V."/>
            <person name="Jones M.T."/>
            <person name="Elhelu A."/>
            <person name="Collins M."/>
            <person name="Kearney K."/>
            <person name="Wagner M."/>
            <person name="Hoshino Y."/>
            <person name="Gouvea V."/>
        </authorList>
    </citation>
    <scope>NUCLEOTIDE SEQUENCE [GENOMIC RNA]</scope>
    <source>
        <strain>Isolate 30-19</strain>
        <strain>Isolate 30-1A</strain>
    </source>
</reference>
<accession>Q99FX7</accession>
<accession>Q99FX6</accession>
<proteinExistence type="inferred from homology"/>
<name>NSP1_ROTSF</name>
<protein>
    <recommendedName>
        <fullName evidence="1">Non-structural protein 1</fullName>
        <shortName evidence="1">NSP1</shortName>
    </recommendedName>
    <alternativeName>
        <fullName evidence="1">NCVP2</fullName>
    </alternativeName>
    <alternativeName>
        <fullName evidence="1">Non-structural RNA-binding protein 53</fullName>
        <shortName evidence="1">NS53</shortName>
    </alternativeName>
</protein>